<organism>
    <name type="scientific">Staphylococcus saprophyticus subsp. saprophyticus (strain ATCC 15305 / DSM 20229 / NCIMB 8711 / NCTC 7292 / S-41)</name>
    <dbReference type="NCBI Taxonomy" id="342451"/>
    <lineage>
        <taxon>Bacteria</taxon>
        <taxon>Bacillati</taxon>
        <taxon>Bacillota</taxon>
        <taxon>Bacilli</taxon>
        <taxon>Bacillales</taxon>
        <taxon>Staphylococcaceae</taxon>
        <taxon>Staphylococcus</taxon>
    </lineage>
</organism>
<feature type="chain" id="PRO_0000257140" description="Probable transcriptional regulatory protein SSP2054">
    <location>
        <begin position="1"/>
        <end position="238"/>
    </location>
</feature>
<name>Y2054_STAS1</name>
<comment type="subcellular location">
    <subcellularLocation>
        <location evidence="1">Cytoplasm</location>
    </subcellularLocation>
</comment>
<comment type="similarity">
    <text evidence="1">Belongs to the TACO1 family. YeeN subfamily.</text>
</comment>
<accession>Q49VL1</accession>
<sequence>MGRKWNNIKEKKAQKDKNTSRIYAKFGKEIYVAAKSGEPDPESNQALRLTLERAKTYSVPNHIIEKAIEKAKGSGEENYDELRYEGFGPSGSMIIVDALTDNVNRTASDVRSAFGKNGGNMGVSGSVAYMFEYTAVFGIEDKSADDILESLMEQDIDVRDVIDENGLTIVYAEPDQFAQVQDALRETGVDTFKVAEFEMLPQTDIELSAEDQETFETLVEALEDLDDVQNVFHNVDLK</sequence>
<gene>
    <name type="ordered locus">SSP2054</name>
</gene>
<evidence type="ECO:0000255" key="1">
    <source>
        <dbReference type="HAMAP-Rule" id="MF_00918"/>
    </source>
</evidence>
<reference key="1">
    <citation type="journal article" date="2005" name="Proc. Natl. Acad. Sci. U.S.A.">
        <title>Whole genome sequence of Staphylococcus saprophyticus reveals the pathogenesis of uncomplicated urinary tract infection.</title>
        <authorList>
            <person name="Kuroda M."/>
            <person name="Yamashita A."/>
            <person name="Hirakawa H."/>
            <person name="Kumano M."/>
            <person name="Morikawa K."/>
            <person name="Higashide M."/>
            <person name="Maruyama A."/>
            <person name="Inose Y."/>
            <person name="Matoba K."/>
            <person name="Toh H."/>
            <person name="Kuhara S."/>
            <person name="Hattori M."/>
            <person name="Ohta T."/>
        </authorList>
    </citation>
    <scope>NUCLEOTIDE SEQUENCE [LARGE SCALE GENOMIC DNA]</scope>
    <source>
        <strain>ATCC 15305 / DSM 20229 / NCIMB 8711 / NCTC 7292 / S-41</strain>
    </source>
</reference>
<keyword id="KW-0963">Cytoplasm</keyword>
<keyword id="KW-0238">DNA-binding</keyword>
<keyword id="KW-1185">Reference proteome</keyword>
<keyword id="KW-0804">Transcription</keyword>
<keyword id="KW-0805">Transcription regulation</keyword>
<dbReference type="EMBL" id="AP008934">
    <property type="protein sequence ID" value="BAE19199.1"/>
    <property type="molecule type" value="Genomic_DNA"/>
</dbReference>
<dbReference type="RefSeq" id="WP_011303701.1">
    <property type="nucleotide sequence ID" value="NZ_MTGA01000039.1"/>
</dbReference>
<dbReference type="SMR" id="Q49VL1"/>
<dbReference type="GeneID" id="3615618"/>
<dbReference type="KEGG" id="ssp:SSP2054"/>
<dbReference type="PATRIC" id="fig|342451.11.peg.2047"/>
<dbReference type="eggNOG" id="COG0217">
    <property type="taxonomic scope" value="Bacteria"/>
</dbReference>
<dbReference type="HOGENOM" id="CLU_062974_2_0_9"/>
<dbReference type="OrthoDB" id="9781053at2"/>
<dbReference type="Proteomes" id="UP000006371">
    <property type="component" value="Chromosome"/>
</dbReference>
<dbReference type="GO" id="GO:0005829">
    <property type="term" value="C:cytosol"/>
    <property type="evidence" value="ECO:0007669"/>
    <property type="project" value="TreeGrafter"/>
</dbReference>
<dbReference type="GO" id="GO:0003677">
    <property type="term" value="F:DNA binding"/>
    <property type="evidence" value="ECO:0007669"/>
    <property type="project" value="UniProtKB-UniRule"/>
</dbReference>
<dbReference type="GO" id="GO:0006355">
    <property type="term" value="P:regulation of DNA-templated transcription"/>
    <property type="evidence" value="ECO:0007669"/>
    <property type="project" value="UniProtKB-UniRule"/>
</dbReference>
<dbReference type="FunFam" id="1.10.10.200:FF:000003">
    <property type="entry name" value="Probable transcriptional regulatory protein YeeN"/>
    <property type="match status" value="1"/>
</dbReference>
<dbReference type="Gene3D" id="1.10.10.200">
    <property type="match status" value="1"/>
</dbReference>
<dbReference type="Gene3D" id="3.30.70.980">
    <property type="match status" value="2"/>
</dbReference>
<dbReference type="HAMAP" id="MF_00693">
    <property type="entry name" value="Transcrip_reg_TACO1"/>
    <property type="match status" value="1"/>
</dbReference>
<dbReference type="HAMAP" id="MF_00918">
    <property type="entry name" value="Transcrip_reg_TACO1_YeeN"/>
    <property type="match status" value="1"/>
</dbReference>
<dbReference type="InterPro" id="IPR017856">
    <property type="entry name" value="Integrase-like_N"/>
</dbReference>
<dbReference type="InterPro" id="IPR048300">
    <property type="entry name" value="TACO1_YebC-like_2nd/3rd_dom"/>
</dbReference>
<dbReference type="InterPro" id="IPR049083">
    <property type="entry name" value="TACO1_YebC_N"/>
</dbReference>
<dbReference type="InterPro" id="IPR002876">
    <property type="entry name" value="Transcrip_reg_TACO1-like"/>
</dbReference>
<dbReference type="InterPro" id="IPR026564">
    <property type="entry name" value="Transcrip_reg_TACO1-like_dom3"/>
</dbReference>
<dbReference type="InterPro" id="IPR026562">
    <property type="entry name" value="Transcrip_reg_TACO1_YeeN"/>
</dbReference>
<dbReference type="InterPro" id="IPR029072">
    <property type="entry name" value="YebC-like"/>
</dbReference>
<dbReference type="NCBIfam" id="NF001030">
    <property type="entry name" value="PRK00110.1"/>
    <property type="match status" value="1"/>
</dbReference>
<dbReference type="NCBIfam" id="NF009044">
    <property type="entry name" value="PRK12378.1"/>
    <property type="match status" value="1"/>
</dbReference>
<dbReference type="NCBIfam" id="TIGR01033">
    <property type="entry name" value="YebC/PmpR family DNA-binding transcriptional regulator"/>
    <property type="match status" value="1"/>
</dbReference>
<dbReference type="PANTHER" id="PTHR12532">
    <property type="entry name" value="TRANSLATIONAL ACTIVATOR OF CYTOCHROME C OXIDASE 1"/>
    <property type="match status" value="1"/>
</dbReference>
<dbReference type="PANTHER" id="PTHR12532:SF0">
    <property type="entry name" value="TRANSLATIONAL ACTIVATOR OF CYTOCHROME C OXIDASE 1"/>
    <property type="match status" value="1"/>
</dbReference>
<dbReference type="Pfam" id="PF20772">
    <property type="entry name" value="TACO1_YebC_N"/>
    <property type="match status" value="1"/>
</dbReference>
<dbReference type="Pfam" id="PF01709">
    <property type="entry name" value="Transcrip_reg"/>
    <property type="match status" value="1"/>
</dbReference>
<dbReference type="SUPFAM" id="SSF75625">
    <property type="entry name" value="YebC-like"/>
    <property type="match status" value="1"/>
</dbReference>
<protein>
    <recommendedName>
        <fullName evidence="1">Probable transcriptional regulatory protein SSP2054</fullName>
    </recommendedName>
</protein>
<proteinExistence type="inferred from homology"/>